<protein>
    <recommendedName>
        <fullName evidence="5 6">Heavy metal-associated isoprenylated plant protein 24</fullName>
        <shortName evidence="5 6">AtHIP24</shortName>
    </recommendedName>
</protein>
<proteinExistence type="evidence at protein level"/>
<feature type="chain" id="PRO_0000437831" description="Heavy metal-associated isoprenylated plant protein 24">
    <location>
        <begin position="1"/>
        <end position="147"/>
    </location>
</feature>
<feature type="propeptide" id="PRO_0000437832" description="Removed in mature form" evidence="7">
    <location>
        <begin position="148"/>
        <end position="150"/>
    </location>
</feature>
<feature type="domain" description="HMA" evidence="3">
    <location>
        <begin position="26"/>
        <end position="89"/>
    </location>
</feature>
<feature type="binding site" evidence="3">
    <location>
        <position position="37"/>
    </location>
    <ligand>
        <name>a metal cation</name>
        <dbReference type="ChEBI" id="CHEBI:25213"/>
    </ligand>
</feature>
<feature type="binding site" evidence="3">
    <location>
        <position position="40"/>
    </location>
    <ligand>
        <name>a metal cation</name>
        <dbReference type="ChEBI" id="CHEBI:25213"/>
    </ligand>
</feature>
<feature type="modified residue" description="Cysteine methyl ester" evidence="2">
    <location>
        <position position="147"/>
    </location>
</feature>
<feature type="lipid moiety-binding region" description="S-farnesyl cysteine" evidence="2">
    <location>
        <position position="147"/>
    </location>
</feature>
<reference key="1">
    <citation type="journal article" date="1999" name="Nature">
        <title>Sequence and analysis of chromosome 4 of the plant Arabidopsis thaliana.</title>
        <authorList>
            <person name="Mayer K.F.X."/>
            <person name="Schueller C."/>
            <person name="Wambutt R."/>
            <person name="Murphy G."/>
            <person name="Volckaert G."/>
            <person name="Pohl T."/>
            <person name="Duesterhoeft A."/>
            <person name="Stiekema W."/>
            <person name="Entian K.-D."/>
            <person name="Terryn N."/>
            <person name="Harris B."/>
            <person name="Ansorge W."/>
            <person name="Brandt P."/>
            <person name="Grivell L.A."/>
            <person name="Rieger M."/>
            <person name="Weichselgartner M."/>
            <person name="de Simone V."/>
            <person name="Obermaier B."/>
            <person name="Mache R."/>
            <person name="Mueller M."/>
            <person name="Kreis M."/>
            <person name="Delseny M."/>
            <person name="Puigdomenech P."/>
            <person name="Watson M."/>
            <person name="Schmidtheini T."/>
            <person name="Reichert B."/>
            <person name="Portetelle D."/>
            <person name="Perez-Alonso M."/>
            <person name="Boutry M."/>
            <person name="Bancroft I."/>
            <person name="Vos P."/>
            <person name="Hoheisel J."/>
            <person name="Zimmermann W."/>
            <person name="Wedler H."/>
            <person name="Ridley P."/>
            <person name="Langham S.-A."/>
            <person name="McCullagh B."/>
            <person name="Bilham L."/>
            <person name="Robben J."/>
            <person name="van der Schueren J."/>
            <person name="Grymonprez B."/>
            <person name="Chuang Y.-J."/>
            <person name="Vandenbussche F."/>
            <person name="Braeken M."/>
            <person name="Weltjens I."/>
            <person name="Voet M."/>
            <person name="Bastiaens I."/>
            <person name="Aert R."/>
            <person name="Defoor E."/>
            <person name="Weitzenegger T."/>
            <person name="Bothe G."/>
            <person name="Ramsperger U."/>
            <person name="Hilbert H."/>
            <person name="Braun M."/>
            <person name="Holzer E."/>
            <person name="Brandt A."/>
            <person name="Peters S."/>
            <person name="van Staveren M."/>
            <person name="Dirkse W."/>
            <person name="Mooijman P."/>
            <person name="Klein Lankhorst R."/>
            <person name="Rose M."/>
            <person name="Hauf J."/>
            <person name="Koetter P."/>
            <person name="Berneiser S."/>
            <person name="Hempel S."/>
            <person name="Feldpausch M."/>
            <person name="Lamberth S."/>
            <person name="Van den Daele H."/>
            <person name="De Keyser A."/>
            <person name="Buysshaert C."/>
            <person name="Gielen J."/>
            <person name="Villarroel R."/>
            <person name="De Clercq R."/>
            <person name="van Montagu M."/>
            <person name="Rogers J."/>
            <person name="Cronin A."/>
            <person name="Quail M.A."/>
            <person name="Bray-Allen S."/>
            <person name="Clark L."/>
            <person name="Doggett J."/>
            <person name="Hall S."/>
            <person name="Kay M."/>
            <person name="Lennard N."/>
            <person name="McLay K."/>
            <person name="Mayes R."/>
            <person name="Pettett A."/>
            <person name="Rajandream M.A."/>
            <person name="Lyne M."/>
            <person name="Benes V."/>
            <person name="Rechmann S."/>
            <person name="Borkova D."/>
            <person name="Bloecker H."/>
            <person name="Scharfe M."/>
            <person name="Grimm M."/>
            <person name="Loehnert T.-H."/>
            <person name="Dose S."/>
            <person name="de Haan M."/>
            <person name="Maarse A.C."/>
            <person name="Schaefer M."/>
            <person name="Mueller-Auer S."/>
            <person name="Gabel C."/>
            <person name="Fuchs M."/>
            <person name="Fartmann B."/>
            <person name="Granderath K."/>
            <person name="Dauner D."/>
            <person name="Herzl A."/>
            <person name="Neumann S."/>
            <person name="Argiriou A."/>
            <person name="Vitale D."/>
            <person name="Liguori R."/>
            <person name="Piravandi E."/>
            <person name="Massenet O."/>
            <person name="Quigley F."/>
            <person name="Clabauld G."/>
            <person name="Muendlein A."/>
            <person name="Felber R."/>
            <person name="Schnabl S."/>
            <person name="Hiller R."/>
            <person name="Schmidt W."/>
            <person name="Lecharny A."/>
            <person name="Aubourg S."/>
            <person name="Chefdor F."/>
            <person name="Cooke R."/>
            <person name="Berger C."/>
            <person name="Monfort A."/>
            <person name="Casacuberta E."/>
            <person name="Gibbons T."/>
            <person name="Weber N."/>
            <person name="Vandenbol M."/>
            <person name="Bargues M."/>
            <person name="Terol J."/>
            <person name="Torres A."/>
            <person name="Perez-Perez A."/>
            <person name="Purnelle B."/>
            <person name="Bent E."/>
            <person name="Johnson S."/>
            <person name="Tacon D."/>
            <person name="Jesse T."/>
            <person name="Heijnen L."/>
            <person name="Schwarz S."/>
            <person name="Scholler P."/>
            <person name="Heber S."/>
            <person name="Francs P."/>
            <person name="Bielke C."/>
            <person name="Frishman D."/>
            <person name="Haase D."/>
            <person name="Lemcke K."/>
            <person name="Mewes H.-W."/>
            <person name="Stocker S."/>
            <person name="Zaccaria P."/>
            <person name="Bevan M."/>
            <person name="Wilson R.K."/>
            <person name="de la Bastide M."/>
            <person name="Habermann K."/>
            <person name="Parnell L."/>
            <person name="Dedhia N."/>
            <person name="Gnoj L."/>
            <person name="Schutz K."/>
            <person name="Huang E."/>
            <person name="Spiegel L."/>
            <person name="Sekhon M."/>
            <person name="Murray J."/>
            <person name="Sheet P."/>
            <person name="Cordes M."/>
            <person name="Abu-Threideh J."/>
            <person name="Stoneking T."/>
            <person name="Kalicki J."/>
            <person name="Graves T."/>
            <person name="Harmon G."/>
            <person name="Edwards J."/>
            <person name="Latreille P."/>
            <person name="Courtney L."/>
            <person name="Cloud J."/>
            <person name="Abbott A."/>
            <person name="Scott K."/>
            <person name="Johnson D."/>
            <person name="Minx P."/>
            <person name="Bentley D."/>
            <person name="Fulton B."/>
            <person name="Miller N."/>
            <person name="Greco T."/>
            <person name="Kemp K."/>
            <person name="Kramer J."/>
            <person name="Fulton L."/>
            <person name="Mardis E."/>
            <person name="Dante M."/>
            <person name="Pepin K."/>
            <person name="Hillier L.W."/>
            <person name="Nelson J."/>
            <person name="Spieth J."/>
            <person name="Ryan E."/>
            <person name="Andrews S."/>
            <person name="Geisel C."/>
            <person name="Layman D."/>
            <person name="Du H."/>
            <person name="Ali J."/>
            <person name="Berghoff A."/>
            <person name="Jones K."/>
            <person name="Drone K."/>
            <person name="Cotton M."/>
            <person name="Joshu C."/>
            <person name="Antonoiu B."/>
            <person name="Zidanic M."/>
            <person name="Strong C."/>
            <person name="Sun H."/>
            <person name="Lamar B."/>
            <person name="Yordan C."/>
            <person name="Ma P."/>
            <person name="Zhong J."/>
            <person name="Preston R."/>
            <person name="Vil D."/>
            <person name="Shekher M."/>
            <person name="Matero A."/>
            <person name="Shah R."/>
            <person name="Swaby I.K."/>
            <person name="O'Shaughnessy A."/>
            <person name="Rodriguez M."/>
            <person name="Hoffman J."/>
            <person name="Till S."/>
            <person name="Granat S."/>
            <person name="Shohdy N."/>
            <person name="Hasegawa A."/>
            <person name="Hameed A."/>
            <person name="Lodhi M."/>
            <person name="Johnson A."/>
            <person name="Chen E."/>
            <person name="Marra M.A."/>
            <person name="Martienssen R."/>
            <person name="McCombie W.R."/>
        </authorList>
    </citation>
    <scope>NUCLEOTIDE SEQUENCE [LARGE SCALE GENOMIC DNA]</scope>
    <source>
        <strain>cv. Columbia</strain>
    </source>
</reference>
<reference key="2">
    <citation type="journal article" date="2017" name="Plant J.">
        <title>Araport11: a complete reannotation of the Arabidopsis thaliana reference genome.</title>
        <authorList>
            <person name="Cheng C.Y."/>
            <person name="Krishnakumar V."/>
            <person name="Chan A.P."/>
            <person name="Thibaud-Nissen F."/>
            <person name="Schobel S."/>
            <person name="Town C.D."/>
        </authorList>
    </citation>
    <scope>GENOME REANNOTATION</scope>
    <source>
        <strain>cv. Columbia</strain>
    </source>
</reference>
<reference key="3">
    <citation type="journal article" date="2003" name="Science">
        <title>Empirical analysis of transcriptional activity in the Arabidopsis genome.</title>
        <authorList>
            <person name="Yamada K."/>
            <person name="Lim J."/>
            <person name="Dale J.M."/>
            <person name="Chen H."/>
            <person name="Shinn P."/>
            <person name="Palm C.J."/>
            <person name="Southwick A.M."/>
            <person name="Wu H.C."/>
            <person name="Kim C.J."/>
            <person name="Nguyen M."/>
            <person name="Pham P.K."/>
            <person name="Cheuk R.F."/>
            <person name="Karlin-Newmann G."/>
            <person name="Liu S.X."/>
            <person name="Lam B."/>
            <person name="Sakano H."/>
            <person name="Wu T."/>
            <person name="Yu G."/>
            <person name="Miranda M."/>
            <person name="Quach H.L."/>
            <person name="Tripp M."/>
            <person name="Chang C.H."/>
            <person name="Lee J.M."/>
            <person name="Toriumi M.J."/>
            <person name="Chan M.M."/>
            <person name="Tang C.C."/>
            <person name="Onodera C.S."/>
            <person name="Deng J.M."/>
            <person name="Akiyama K."/>
            <person name="Ansari Y."/>
            <person name="Arakawa T."/>
            <person name="Banh J."/>
            <person name="Banno F."/>
            <person name="Bowser L."/>
            <person name="Brooks S.Y."/>
            <person name="Carninci P."/>
            <person name="Chao Q."/>
            <person name="Choy N."/>
            <person name="Enju A."/>
            <person name="Goldsmith A.D."/>
            <person name="Gurjal M."/>
            <person name="Hansen N.F."/>
            <person name="Hayashizaki Y."/>
            <person name="Johnson-Hopson C."/>
            <person name="Hsuan V.W."/>
            <person name="Iida K."/>
            <person name="Karnes M."/>
            <person name="Khan S."/>
            <person name="Koesema E."/>
            <person name="Ishida J."/>
            <person name="Jiang P.X."/>
            <person name="Jones T."/>
            <person name="Kawai J."/>
            <person name="Kamiya A."/>
            <person name="Meyers C."/>
            <person name="Nakajima M."/>
            <person name="Narusaka M."/>
            <person name="Seki M."/>
            <person name="Sakurai T."/>
            <person name="Satou M."/>
            <person name="Tamse R."/>
            <person name="Vaysberg M."/>
            <person name="Wallender E.K."/>
            <person name="Wong C."/>
            <person name="Yamamura Y."/>
            <person name="Yuan S."/>
            <person name="Shinozaki K."/>
            <person name="Davis R.W."/>
            <person name="Theologis A."/>
            <person name="Ecker J.R."/>
        </authorList>
    </citation>
    <scope>NUCLEOTIDE SEQUENCE [LARGE SCALE MRNA]</scope>
    <source>
        <strain>cv. Columbia</strain>
    </source>
</reference>
<reference key="4">
    <citation type="submission" date="2006-07" db="EMBL/GenBank/DDBJ databases">
        <title>Large-scale analysis of RIKEN Arabidopsis full-length (RAFL) cDNAs.</title>
        <authorList>
            <person name="Totoki Y."/>
            <person name="Seki M."/>
            <person name="Ishida J."/>
            <person name="Nakajima M."/>
            <person name="Enju A."/>
            <person name="Kamiya A."/>
            <person name="Narusaka M."/>
            <person name="Shin-i T."/>
            <person name="Nakagawa M."/>
            <person name="Sakamoto N."/>
            <person name="Oishi K."/>
            <person name="Kohara Y."/>
            <person name="Kobayashi M."/>
            <person name="Toyoda A."/>
            <person name="Sakaki Y."/>
            <person name="Sakurai T."/>
            <person name="Iida K."/>
            <person name="Akiyama K."/>
            <person name="Satou M."/>
            <person name="Toyoda T."/>
            <person name="Konagaya A."/>
            <person name="Carninci P."/>
            <person name="Kawai J."/>
            <person name="Hayashizaki Y."/>
            <person name="Shinozaki K."/>
        </authorList>
    </citation>
    <scope>NUCLEOTIDE SEQUENCE [LARGE SCALE MRNA]</scope>
    <source>
        <strain>cv. Columbia</strain>
    </source>
</reference>
<reference key="5">
    <citation type="journal article" date="2009" name="Plant Mol. Biol.">
        <title>Stress induced and nuclear localized HIPP26 from Arabidopsis thaliana interacts via its heavy metal associated domain with the drought stress related zinc finger transcription factor ATHB29.</title>
        <authorList>
            <person name="Barth O."/>
            <person name="Vogt S."/>
            <person name="Uhlemann R."/>
            <person name="Zschiesche W."/>
            <person name="Humbeck K."/>
        </authorList>
    </citation>
    <scope>INTERACTION WITH ZHD11/HB29</scope>
    <source>
        <strain>cv. Columbia</strain>
    </source>
</reference>
<reference key="6">
    <citation type="journal article" date="2010" name="Metallomics">
        <title>Metallochaperone-like genes in Arabidopsis thaliana.</title>
        <authorList>
            <person name="Tehseen M."/>
            <person name="Cairns N."/>
            <person name="Sherson S."/>
            <person name="Cobbett C.S."/>
        </authorList>
    </citation>
    <scope>GENE FAMILY</scope>
    <scope>NOMENCLATURE</scope>
</reference>
<reference key="7">
    <citation type="journal article" date="2013" name="FEBS J.">
        <title>Heavy metal-associated isoprenylated plant protein (HIPP): characterization of a family of proteins exclusive to plants.</title>
        <authorList>
            <person name="de Abreu-Neto J.B."/>
            <person name="Turchetto-Zolet A.C."/>
            <person name="de Oliveira L.F."/>
            <person name="Zanettini M.H."/>
            <person name="Margis-Pinheiro M."/>
        </authorList>
    </citation>
    <scope>GENE FAMILY</scope>
    <scope>NOMENCLATURE</scope>
</reference>
<name>HIP24_ARATH</name>
<gene>
    <name evidence="5 6" type="primary">HIPP24</name>
    <name evidence="8" type="ordered locus">At4g08570</name>
    <name evidence="9" type="ORF">T15F16.6</name>
</gene>
<accession>O81464</accession>
<keyword id="KW-0449">Lipoprotein</keyword>
<keyword id="KW-0479">Metal-binding</keyword>
<keyword id="KW-0488">Methylation</keyword>
<keyword id="KW-0636">Prenylation</keyword>
<keyword id="KW-1185">Reference proteome</keyword>
<evidence type="ECO:0000250" key="1">
    <source>
        <dbReference type="UniProtKB" id="Q9LZF1"/>
    </source>
</evidence>
<evidence type="ECO:0000250" key="2">
    <source>
        <dbReference type="UniProtKB" id="Q9SZN7"/>
    </source>
</evidence>
<evidence type="ECO:0000255" key="3">
    <source>
        <dbReference type="PROSITE-ProRule" id="PRU00280"/>
    </source>
</evidence>
<evidence type="ECO:0000269" key="4">
    <source>
    </source>
</evidence>
<evidence type="ECO:0000303" key="5">
    <source>
    </source>
</evidence>
<evidence type="ECO:0000303" key="6">
    <source>
    </source>
</evidence>
<evidence type="ECO:0000305" key="7"/>
<evidence type="ECO:0000312" key="8">
    <source>
        <dbReference type="Araport" id="AT4G08570"/>
    </source>
</evidence>
<evidence type="ECO:0000312" key="9">
    <source>
        <dbReference type="EMBL" id="AAC28185.1"/>
    </source>
</evidence>
<comment type="function">
    <text evidence="1">Heavy-metal-binding protein.</text>
</comment>
<comment type="subunit">
    <text evidence="4">Interacts with ZHD11/HB29.</text>
</comment>
<comment type="similarity">
    <text evidence="7">Belongs to the HIPP family.</text>
</comment>
<sequence length="150" mass="16904">MGVEGTMEYISDLLKKRKRKKKKQMQTVALRVARIDCEGCERKIKHVLSGVKGVKSVDVDVKLQKVTVTGYIDPKKVLEAAKSTKKKVELWPYVPYTMVANPYISQAYDKKAPPNMVRKVPDTASVNETTVDDSYTIMFSDENPNSCAIM</sequence>
<organism>
    <name type="scientific">Arabidopsis thaliana</name>
    <name type="common">Mouse-ear cress</name>
    <dbReference type="NCBI Taxonomy" id="3702"/>
    <lineage>
        <taxon>Eukaryota</taxon>
        <taxon>Viridiplantae</taxon>
        <taxon>Streptophyta</taxon>
        <taxon>Embryophyta</taxon>
        <taxon>Tracheophyta</taxon>
        <taxon>Spermatophyta</taxon>
        <taxon>Magnoliopsida</taxon>
        <taxon>eudicotyledons</taxon>
        <taxon>Gunneridae</taxon>
        <taxon>Pentapetalae</taxon>
        <taxon>rosids</taxon>
        <taxon>malvids</taxon>
        <taxon>Brassicales</taxon>
        <taxon>Brassicaceae</taxon>
        <taxon>Camelineae</taxon>
        <taxon>Arabidopsis</taxon>
    </lineage>
</organism>
<dbReference type="EMBL" id="AF076275">
    <property type="protein sequence ID" value="AAC28185.1"/>
    <property type="molecule type" value="Genomic_DNA"/>
</dbReference>
<dbReference type="EMBL" id="AL161512">
    <property type="protein sequence ID" value="CAB77982.1"/>
    <property type="molecule type" value="Genomic_DNA"/>
</dbReference>
<dbReference type="EMBL" id="CP002687">
    <property type="protein sequence ID" value="AEE82659.1"/>
    <property type="molecule type" value="Genomic_DNA"/>
</dbReference>
<dbReference type="EMBL" id="AY070406">
    <property type="protein sequence ID" value="AAL49902.1"/>
    <property type="molecule type" value="mRNA"/>
</dbReference>
<dbReference type="EMBL" id="AY096585">
    <property type="protein sequence ID" value="AAM20235.1"/>
    <property type="molecule type" value="mRNA"/>
</dbReference>
<dbReference type="EMBL" id="AK226467">
    <property type="protein sequence ID" value="BAE98609.1"/>
    <property type="molecule type" value="mRNA"/>
</dbReference>
<dbReference type="PIR" id="T01827">
    <property type="entry name" value="T01827"/>
</dbReference>
<dbReference type="RefSeq" id="NP_192597.1">
    <property type="nucleotide sequence ID" value="NM_116926.4"/>
</dbReference>
<dbReference type="SMR" id="O81464"/>
<dbReference type="FunCoup" id="O81464">
    <property type="interactions" value="46"/>
</dbReference>
<dbReference type="IntAct" id="O81464">
    <property type="interactions" value="2"/>
</dbReference>
<dbReference type="STRING" id="3702.O81464"/>
<dbReference type="PaxDb" id="3702-AT4G08570.1"/>
<dbReference type="ProteomicsDB" id="230390"/>
<dbReference type="EnsemblPlants" id="AT4G08570.1">
    <property type="protein sequence ID" value="AT4G08570.1"/>
    <property type="gene ID" value="AT4G08570"/>
</dbReference>
<dbReference type="GeneID" id="826418"/>
<dbReference type="Gramene" id="AT4G08570.1">
    <property type="protein sequence ID" value="AT4G08570.1"/>
    <property type="gene ID" value="AT4G08570"/>
</dbReference>
<dbReference type="KEGG" id="ath:AT4G08570"/>
<dbReference type="Araport" id="AT4G08570"/>
<dbReference type="TAIR" id="AT4G08570">
    <property type="gene designation" value="HIPP24"/>
</dbReference>
<dbReference type="eggNOG" id="KOG1603">
    <property type="taxonomic scope" value="Eukaryota"/>
</dbReference>
<dbReference type="HOGENOM" id="CLU_100095_1_0_1"/>
<dbReference type="InParanoid" id="O81464"/>
<dbReference type="OMA" id="YTIMFSD"/>
<dbReference type="OrthoDB" id="689350at2759"/>
<dbReference type="PhylomeDB" id="O81464"/>
<dbReference type="PRO" id="PR:O81464"/>
<dbReference type="Proteomes" id="UP000006548">
    <property type="component" value="Chromosome 4"/>
</dbReference>
<dbReference type="ExpressionAtlas" id="O81464">
    <property type="expression patterns" value="baseline and differential"/>
</dbReference>
<dbReference type="GO" id="GO:0046872">
    <property type="term" value="F:metal ion binding"/>
    <property type="evidence" value="ECO:0007669"/>
    <property type="project" value="UniProtKB-KW"/>
</dbReference>
<dbReference type="CDD" id="cd00371">
    <property type="entry name" value="HMA"/>
    <property type="match status" value="1"/>
</dbReference>
<dbReference type="Gene3D" id="3.30.70.100">
    <property type="match status" value="1"/>
</dbReference>
<dbReference type="InterPro" id="IPR017969">
    <property type="entry name" value="Heavy-metal-associated_CS"/>
</dbReference>
<dbReference type="InterPro" id="IPR006121">
    <property type="entry name" value="HMA_dom"/>
</dbReference>
<dbReference type="InterPro" id="IPR036163">
    <property type="entry name" value="HMA_dom_sf"/>
</dbReference>
<dbReference type="PANTHER" id="PTHR22814">
    <property type="entry name" value="COPPER TRANSPORT PROTEIN ATOX1-RELATED"/>
    <property type="match status" value="1"/>
</dbReference>
<dbReference type="PANTHER" id="PTHR22814:SF84">
    <property type="entry name" value="HEAVY METAL-ASSOCIATED ISOPRENYLATED PLANT PROTEIN 24"/>
    <property type="match status" value="1"/>
</dbReference>
<dbReference type="Pfam" id="PF00403">
    <property type="entry name" value="HMA"/>
    <property type="match status" value="1"/>
</dbReference>
<dbReference type="SUPFAM" id="SSF55008">
    <property type="entry name" value="HMA, heavy metal-associated domain"/>
    <property type="match status" value="1"/>
</dbReference>
<dbReference type="PROSITE" id="PS01047">
    <property type="entry name" value="HMA_1"/>
    <property type="match status" value="1"/>
</dbReference>
<dbReference type="PROSITE" id="PS50846">
    <property type="entry name" value="HMA_2"/>
    <property type="match status" value="1"/>
</dbReference>